<gene>
    <name evidence="1" type="primary">rplT</name>
    <name type="ordered locus">VS_1231</name>
</gene>
<evidence type="ECO:0000255" key="1">
    <source>
        <dbReference type="HAMAP-Rule" id="MF_00382"/>
    </source>
</evidence>
<evidence type="ECO:0000305" key="2"/>
<dbReference type="EMBL" id="FM954972">
    <property type="protein sequence ID" value="CAV18362.1"/>
    <property type="molecule type" value="Genomic_DNA"/>
</dbReference>
<dbReference type="SMR" id="B7VN20"/>
<dbReference type="STRING" id="575788.VS_1231"/>
<dbReference type="KEGG" id="vsp:VS_1231"/>
<dbReference type="eggNOG" id="COG0292">
    <property type="taxonomic scope" value="Bacteria"/>
</dbReference>
<dbReference type="HOGENOM" id="CLU_123265_0_1_6"/>
<dbReference type="Proteomes" id="UP000009100">
    <property type="component" value="Chromosome 1"/>
</dbReference>
<dbReference type="GO" id="GO:1990904">
    <property type="term" value="C:ribonucleoprotein complex"/>
    <property type="evidence" value="ECO:0007669"/>
    <property type="project" value="UniProtKB-KW"/>
</dbReference>
<dbReference type="GO" id="GO:0005840">
    <property type="term" value="C:ribosome"/>
    <property type="evidence" value="ECO:0007669"/>
    <property type="project" value="UniProtKB-KW"/>
</dbReference>
<dbReference type="GO" id="GO:0019843">
    <property type="term" value="F:rRNA binding"/>
    <property type="evidence" value="ECO:0007669"/>
    <property type="project" value="UniProtKB-UniRule"/>
</dbReference>
<dbReference type="GO" id="GO:0003735">
    <property type="term" value="F:structural constituent of ribosome"/>
    <property type="evidence" value="ECO:0007669"/>
    <property type="project" value="InterPro"/>
</dbReference>
<dbReference type="GO" id="GO:0000027">
    <property type="term" value="P:ribosomal large subunit assembly"/>
    <property type="evidence" value="ECO:0007669"/>
    <property type="project" value="UniProtKB-UniRule"/>
</dbReference>
<dbReference type="GO" id="GO:0006412">
    <property type="term" value="P:translation"/>
    <property type="evidence" value="ECO:0007669"/>
    <property type="project" value="InterPro"/>
</dbReference>
<dbReference type="CDD" id="cd07026">
    <property type="entry name" value="Ribosomal_L20"/>
    <property type="match status" value="1"/>
</dbReference>
<dbReference type="FunFam" id="1.10.1900.20:FF:000001">
    <property type="entry name" value="50S ribosomal protein L20"/>
    <property type="match status" value="1"/>
</dbReference>
<dbReference type="Gene3D" id="6.10.160.10">
    <property type="match status" value="1"/>
</dbReference>
<dbReference type="Gene3D" id="1.10.1900.20">
    <property type="entry name" value="Ribosomal protein L20"/>
    <property type="match status" value="1"/>
</dbReference>
<dbReference type="HAMAP" id="MF_00382">
    <property type="entry name" value="Ribosomal_bL20"/>
    <property type="match status" value="1"/>
</dbReference>
<dbReference type="InterPro" id="IPR005813">
    <property type="entry name" value="Ribosomal_bL20"/>
</dbReference>
<dbReference type="InterPro" id="IPR049946">
    <property type="entry name" value="RIBOSOMAL_L20_CS"/>
</dbReference>
<dbReference type="InterPro" id="IPR035566">
    <property type="entry name" value="Ribosomal_protein_bL20_C"/>
</dbReference>
<dbReference type="NCBIfam" id="TIGR01032">
    <property type="entry name" value="rplT_bact"/>
    <property type="match status" value="1"/>
</dbReference>
<dbReference type="PANTHER" id="PTHR10986">
    <property type="entry name" value="39S RIBOSOMAL PROTEIN L20"/>
    <property type="match status" value="1"/>
</dbReference>
<dbReference type="Pfam" id="PF00453">
    <property type="entry name" value="Ribosomal_L20"/>
    <property type="match status" value="1"/>
</dbReference>
<dbReference type="PRINTS" id="PR00062">
    <property type="entry name" value="RIBOSOMALL20"/>
</dbReference>
<dbReference type="SUPFAM" id="SSF74731">
    <property type="entry name" value="Ribosomal protein L20"/>
    <property type="match status" value="1"/>
</dbReference>
<dbReference type="PROSITE" id="PS00937">
    <property type="entry name" value="RIBOSOMAL_L20"/>
    <property type="match status" value="1"/>
</dbReference>
<proteinExistence type="inferred from homology"/>
<organism>
    <name type="scientific">Vibrio atlanticus (strain LGP32)</name>
    <name type="common">Vibrio splendidus (strain Mel32)</name>
    <dbReference type="NCBI Taxonomy" id="575788"/>
    <lineage>
        <taxon>Bacteria</taxon>
        <taxon>Pseudomonadati</taxon>
        <taxon>Pseudomonadota</taxon>
        <taxon>Gammaproteobacteria</taxon>
        <taxon>Vibrionales</taxon>
        <taxon>Vibrionaceae</taxon>
        <taxon>Vibrio</taxon>
    </lineage>
</organism>
<accession>B7VN20</accession>
<keyword id="KW-0687">Ribonucleoprotein</keyword>
<keyword id="KW-0689">Ribosomal protein</keyword>
<keyword id="KW-0694">RNA-binding</keyword>
<keyword id="KW-0699">rRNA-binding</keyword>
<sequence length="117" mass="13443">MPRVKRGVQARARHKKVLKQAKGYYGARSRVYRVAFQAVTKAGQYAYRDRRNKKRQFRQLWIARINAASRQNGLSYSRFINGLKKASIEIDRKILADIAVFDKAAFAVLVEKAKASL</sequence>
<comment type="function">
    <text evidence="1">Binds directly to 23S ribosomal RNA and is necessary for the in vitro assembly process of the 50S ribosomal subunit. It is not involved in the protein synthesizing functions of that subunit.</text>
</comment>
<comment type="similarity">
    <text evidence="1">Belongs to the bacterial ribosomal protein bL20 family.</text>
</comment>
<feature type="chain" id="PRO_1000134234" description="Large ribosomal subunit protein bL20">
    <location>
        <begin position="1"/>
        <end position="117"/>
    </location>
</feature>
<name>RL20_VIBA3</name>
<protein>
    <recommendedName>
        <fullName evidence="1">Large ribosomal subunit protein bL20</fullName>
    </recommendedName>
    <alternativeName>
        <fullName evidence="2">50S ribosomal protein L20</fullName>
    </alternativeName>
</protein>
<reference key="1">
    <citation type="submission" date="2009-02" db="EMBL/GenBank/DDBJ databases">
        <title>Vibrio splendidus str. LGP32 complete genome.</title>
        <authorList>
            <person name="Mazel D."/>
            <person name="Le Roux F."/>
        </authorList>
    </citation>
    <scope>NUCLEOTIDE SEQUENCE [LARGE SCALE GENOMIC DNA]</scope>
    <source>
        <strain>LGP32</strain>
    </source>
</reference>